<sequence length="580" mass="66615">MHLSAVFNALLVSVLAAVLWKHVRLREHAATLEEELALSRQATEPAPALRIDYPKALQILMEGGTHMVCTGRTHTDRICRFKWLCYSNEAEEFIFFHGNTSVMLPNLGSRRFQPALLDLSTVEDHNTQYFNFVELPAAALRFMPKPVFVPDVALIANRFNPDNLMHVFHDDLLPLFYTLRQFPGLAHEARLFFMEGWGEGAHFDLYKLLSPKQPLLRAQLKTLGRLLCFSHAFVGLSKITTWYQYGFVQPQGPKANILVSGNEIRQFARFMTEKLNVSHTGVPLGEEYILVFSRTQNRLILNEAELLLALAQEFQMKTVTVSLEDHTFADVVRLVSNASMLVSMHGAQLVTTLFLPRGATVVELFPYAVNPDHYTPYKTLAMLPGMDLQYVAWRNMMPENTVTHPERPWDQGGITHLDRAEQARILQSREVPRHLCCRNPEWLFRIYQDTKVDIPSLIQTIRRVVKGRPGPRKQKWTVGLYPGKVREARCQASVHGASEARLTVSWQIPWNLKYLKVREVKYEVWLQEQGENTYVPYILALQNHTFTENIKPFTTYLVWVRCIFNKILLGPFADVLVCNT</sequence>
<name>PMGT2_HUMAN</name>
<evidence type="ECO:0000255" key="1"/>
<evidence type="ECO:0000255" key="2">
    <source>
        <dbReference type="PROSITE-ProRule" id="PRU00316"/>
    </source>
</evidence>
<evidence type="ECO:0000269" key="3">
    <source>
    </source>
</evidence>
<evidence type="ECO:0000269" key="4">
    <source>
    </source>
</evidence>
<evidence type="ECO:0000269" key="5">
    <source>
    </source>
</evidence>
<evidence type="ECO:0000303" key="6">
    <source>
    </source>
</evidence>
<evidence type="ECO:0000305" key="7"/>
<evidence type="ECO:0007829" key="8">
    <source>
        <dbReference type="PDB" id="6XFI"/>
    </source>
</evidence>
<evidence type="ECO:0007829" key="9">
    <source>
        <dbReference type="PDB" id="8KB7"/>
    </source>
</evidence>
<dbReference type="EC" id="2.4.1.312" evidence="4 5"/>
<dbReference type="EMBL" id="AK027472">
    <property type="protein sequence ID" value="BAB55137.1"/>
    <property type="molecule type" value="mRNA"/>
</dbReference>
<dbReference type="EMBL" id="AK092147">
    <property type="protein sequence ID" value="BAC03816.1"/>
    <property type="molecule type" value="mRNA"/>
</dbReference>
<dbReference type="EMBL" id="AK124737">
    <property type="protein sequence ID" value="BAG54085.1"/>
    <property type="molecule type" value="mRNA"/>
</dbReference>
<dbReference type="EMBL" id="AC092042">
    <property type="status" value="NOT_ANNOTATED_CDS"/>
    <property type="molecule type" value="Genomic_DNA"/>
</dbReference>
<dbReference type="EMBL" id="CH471055">
    <property type="protein sequence ID" value="EAW64690.1"/>
    <property type="molecule type" value="Genomic_DNA"/>
</dbReference>
<dbReference type="EMBL" id="BC060861">
    <property type="protein sequence ID" value="AAH60861.1"/>
    <property type="molecule type" value="mRNA"/>
</dbReference>
<dbReference type="CCDS" id="CCDS2709.1"/>
<dbReference type="RefSeq" id="NP_116195.2">
    <property type="nucleotide sequence ID" value="NM_032806.5"/>
</dbReference>
<dbReference type="RefSeq" id="XP_005265572.1">
    <property type="nucleotide sequence ID" value="XM_005265515.4"/>
</dbReference>
<dbReference type="RefSeq" id="XP_011532465.1">
    <property type="nucleotide sequence ID" value="XM_011534163.3"/>
</dbReference>
<dbReference type="RefSeq" id="XP_011532466.1">
    <property type="nucleotide sequence ID" value="XM_011534164.1"/>
</dbReference>
<dbReference type="RefSeq" id="XP_016862842.1">
    <property type="nucleotide sequence ID" value="XM_017007353.2"/>
</dbReference>
<dbReference type="RefSeq" id="XP_054204124.1">
    <property type="nucleotide sequence ID" value="XM_054348149.1"/>
</dbReference>
<dbReference type="RefSeq" id="XP_054204125.1">
    <property type="nucleotide sequence ID" value="XM_054348150.1"/>
</dbReference>
<dbReference type="RefSeq" id="XP_054204126.1">
    <property type="nucleotide sequence ID" value="XM_054348151.1"/>
</dbReference>
<dbReference type="PDB" id="6XFI">
    <property type="method" value="X-ray"/>
    <property type="resolution" value="2.00 A"/>
    <property type="chains" value="A=52-580"/>
</dbReference>
<dbReference type="PDB" id="8KB7">
    <property type="method" value="X-ray"/>
    <property type="resolution" value="2.80 A"/>
    <property type="chains" value="A/B/C/D=26-580"/>
</dbReference>
<dbReference type="PDBsum" id="6XFI"/>
<dbReference type="PDBsum" id="8KB7"/>
<dbReference type="SMR" id="Q8NAT1"/>
<dbReference type="BioGRID" id="124332">
    <property type="interactions" value="129"/>
</dbReference>
<dbReference type="FunCoup" id="Q8NAT1">
    <property type="interactions" value="634"/>
</dbReference>
<dbReference type="IntAct" id="Q8NAT1">
    <property type="interactions" value="68"/>
</dbReference>
<dbReference type="MINT" id="Q8NAT1"/>
<dbReference type="STRING" id="9606.ENSP00000344125"/>
<dbReference type="CAZy" id="GT61">
    <property type="family name" value="Glycosyltransferase Family 61"/>
</dbReference>
<dbReference type="GlyCosmos" id="Q8NAT1">
    <property type="glycosylation" value="2 sites, No reported glycans"/>
</dbReference>
<dbReference type="GlyGen" id="Q8NAT1">
    <property type="glycosylation" value="5 sites, 6 N-linked glycans (2 sites), 2 O-linked glycans (2 sites)"/>
</dbReference>
<dbReference type="iPTMnet" id="Q8NAT1"/>
<dbReference type="PhosphoSitePlus" id="Q8NAT1"/>
<dbReference type="BioMuta" id="POMGNT2"/>
<dbReference type="DMDM" id="74729999"/>
<dbReference type="jPOST" id="Q8NAT1"/>
<dbReference type="MassIVE" id="Q8NAT1"/>
<dbReference type="PaxDb" id="9606-ENSP00000344125"/>
<dbReference type="PeptideAtlas" id="Q8NAT1"/>
<dbReference type="ProteomicsDB" id="72695"/>
<dbReference type="Pumba" id="Q8NAT1"/>
<dbReference type="Antibodypedia" id="29340">
    <property type="antibodies" value="157 antibodies from 27 providers"/>
</dbReference>
<dbReference type="DNASU" id="84892"/>
<dbReference type="Ensembl" id="ENST00000344697.3">
    <property type="protein sequence ID" value="ENSP00000344125.2"/>
    <property type="gene ID" value="ENSG00000144647.7"/>
</dbReference>
<dbReference type="Ensembl" id="ENST00000441964.1">
    <property type="protein sequence ID" value="ENSP00000408992.1"/>
    <property type="gene ID" value="ENSG00000144647.7"/>
</dbReference>
<dbReference type="Ensembl" id="ENST00000686643.1">
    <property type="protein sequence ID" value="ENSP00000509123.1"/>
    <property type="gene ID" value="ENSG00000144647.7"/>
</dbReference>
<dbReference type="Ensembl" id="ENST00000687440.1">
    <property type="protein sequence ID" value="ENSP00000509610.1"/>
    <property type="gene ID" value="ENSG00000144647.7"/>
</dbReference>
<dbReference type="Ensembl" id="ENST00000689987.1">
    <property type="protein sequence ID" value="ENSP00000510646.1"/>
    <property type="gene ID" value="ENSG00000144647.7"/>
</dbReference>
<dbReference type="Ensembl" id="ENST00000692017.1">
    <property type="protein sequence ID" value="ENSP00000510571.1"/>
    <property type="gene ID" value="ENSG00000144647.7"/>
</dbReference>
<dbReference type="Ensembl" id="ENST00000693717.1">
    <property type="protein sequence ID" value="ENSP00000510801.1"/>
    <property type="gene ID" value="ENSG00000144647.7"/>
</dbReference>
<dbReference type="GeneID" id="84892"/>
<dbReference type="KEGG" id="hsa:84892"/>
<dbReference type="MANE-Select" id="ENST00000344697.3">
    <property type="protein sequence ID" value="ENSP00000344125.2"/>
    <property type="RefSeq nucleotide sequence ID" value="NM_032806.6"/>
    <property type="RefSeq protein sequence ID" value="NP_116195.2"/>
</dbReference>
<dbReference type="UCSC" id="uc003cmr.3">
    <property type="organism name" value="human"/>
</dbReference>
<dbReference type="AGR" id="HGNC:25902"/>
<dbReference type="CTD" id="84892"/>
<dbReference type="DisGeNET" id="84892"/>
<dbReference type="GeneCards" id="POMGNT2"/>
<dbReference type="HGNC" id="HGNC:25902">
    <property type="gene designation" value="POMGNT2"/>
</dbReference>
<dbReference type="HPA" id="ENSG00000144647">
    <property type="expression patterns" value="Low tissue specificity"/>
</dbReference>
<dbReference type="MalaCards" id="POMGNT2"/>
<dbReference type="MIM" id="614828">
    <property type="type" value="gene"/>
</dbReference>
<dbReference type="MIM" id="614830">
    <property type="type" value="phenotype"/>
</dbReference>
<dbReference type="MIM" id="618135">
    <property type="type" value="phenotype"/>
</dbReference>
<dbReference type="neXtProt" id="NX_Q8NAT1"/>
<dbReference type="OpenTargets" id="ENSG00000144647"/>
<dbReference type="Orphanet" id="899">
    <property type="disease" value="Walker-Warburg syndrome"/>
</dbReference>
<dbReference type="PharmGKB" id="PA142672374"/>
<dbReference type="VEuPathDB" id="HostDB:ENSG00000144647"/>
<dbReference type="eggNOG" id="KOG4698">
    <property type="taxonomic scope" value="Eukaryota"/>
</dbReference>
<dbReference type="GeneTree" id="ENSGT00940000160695"/>
<dbReference type="HOGENOM" id="CLU_020169_0_0_1"/>
<dbReference type="InParanoid" id="Q8NAT1"/>
<dbReference type="OMA" id="EFQMRVV"/>
<dbReference type="OrthoDB" id="529273at2759"/>
<dbReference type="PAN-GO" id="Q8NAT1">
    <property type="GO annotations" value="4 GO annotations based on evolutionary models"/>
</dbReference>
<dbReference type="PhylomeDB" id="Q8NAT1"/>
<dbReference type="TreeFam" id="TF332712"/>
<dbReference type="BioCyc" id="MetaCyc:ENSG00000144647-MONOMER"/>
<dbReference type="BRENDA" id="2.4.1.312">
    <property type="organism ID" value="2681"/>
</dbReference>
<dbReference type="PathwayCommons" id="Q8NAT1"/>
<dbReference type="Reactome" id="R-HSA-5173105">
    <property type="pathway name" value="O-linked glycosylation"/>
</dbReference>
<dbReference type="SignaLink" id="Q8NAT1"/>
<dbReference type="UniPathway" id="UPA00378"/>
<dbReference type="BioGRID-ORCS" id="84892">
    <property type="hits" value="10 hits in 1139 CRISPR screens"/>
</dbReference>
<dbReference type="ChiTaRS" id="POMGNT2">
    <property type="organism name" value="human"/>
</dbReference>
<dbReference type="GenomeRNAi" id="84892"/>
<dbReference type="Pharos" id="Q8NAT1">
    <property type="development level" value="Tbio"/>
</dbReference>
<dbReference type="PRO" id="PR:Q8NAT1"/>
<dbReference type="Proteomes" id="UP000005640">
    <property type="component" value="Chromosome 3"/>
</dbReference>
<dbReference type="RNAct" id="Q8NAT1">
    <property type="molecule type" value="protein"/>
</dbReference>
<dbReference type="Bgee" id="ENSG00000144647">
    <property type="expression patterns" value="Expressed in lateral nuclear group of thalamus and 177 other cell types or tissues"/>
</dbReference>
<dbReference type="ExpressionAtlas" id="Q8NAT1">
    <property type="expression patterns" value="baseline and differential"/>
</dbReference>
<dbReference type="GO" id="GO:0005783">
    <property type="term" value="C:endoplasmic reticulum"/>
    <property type="evidence" value="ECO:0000314"/>
    <property type="project" value="UniProtKB"/>
</dbReference>
<dbReference type="GO" id="GO:0005789">
    <property type="term" value="C:endoplasmic reticulum membrane"/>
    <property type="evidence" value="ECO:0000304"/>
    <property type="project" value="Reactome"/>
</dbReference>
<dbReference type="GO" id="GO:0008375">
    <property type="term" value="F:acetylglucosaminyltransferase activity"/>
    <property type="evidence" value="ECO:0000314"/>
    <property type="project" value="UniProtKB"/>
</dbReference>
<dbReference type="GO" id="GO:0097363">
    <property type="term" value="F:protein O-acetylglucosaminyltransferase activity"/>
    <property type="evidence" value="ECO:0000314"/>
    <property type="project" value="MGI"/>
</dbReference>
<dbReference type="GO" id="GO:0001764">
    <property type="term" value="P:neuron migration"/>
    <property type="evidence" value="ECO:0000250"/>
    <property type="project" value="UniProtKB"/>
</dbReference>
<dbReference type="GO" id="GO:0006493">
    <property type="term" value="P:protein O-linked glycosylation"/>
    <property type="evidence" value="ECO:0000314"/>
    <property type="project" value="UniProtKB"/>
</dbReference>
<dbReference type="GO" id="GO:0035269">
    <property type="term" value="P:protein O-linked mannosylation"/>
    <property type="evidence" value="ECO:0000250"/>
    <property type="project" value="UniProtKB"/>
</dbReference>
<dbReference type="CDD" id="cd00063">
    <property type="entry name" value="FN3"/>
    <property type="match status" value="1"/>
</dbReference>
<dbReference type="Gene3D" id="2.60.40.10">
    <property type="entry name" value="Immunoglobulins"/>
    <property type="match status" value="1"/>
</dbReference>
<dbReference type="InterPro" id="IPR003961">
    <property type="entry name" value="FN3_dom"/>
</dbReference>
<dbReference type="InterPro" id="IPR036116">
    <property type="entry name" value="FN3_sf"/>
</dbReference>
<dbReference type="InterPro" id="IPR049625">
    <property type="entry name" value="Glyco_transf_61_cat"/>
</dbReference>
<dbReference type="InterPro" id="IPR007657">
    <property type="entry name" value="Glycosyltransferase_61"/>
</dbReference>
<dbReference type="InterPro" id="IPR013783">
    <property type="entry name" value="Ig-like_fold"/>
</dbReference>
<dbReference type="PANTHER" id="PTHR20961">
    <property type="entry name" value="GLYCOSYLTRANSFERASE"/>
    <property type="match status" value="1"/>
</dbReference>
<dbReference type="PANTHER" id="PTHR20961:SF38">
    <property type="entry name" value="PROTEIN O-LINKED-MANNOSE BETA-1,4-N-ACETYLGLUCOSAMINYLTRANSFERASE 2"/>
    <property type="match status" value="1"/>
</dbReference>
<dbReference type="Pfam" id="PF04577">
    <property type="entry name" value="Glyco_transf_61"/>
    <property type="match status" value="1"/>
</dbReference>
<dbReference type="SUPFAM" id="SSF49265">
    <property type="entry name" value="Fibronectin type III"/>
    <property type="match status" value="1"/>
</dbReference>
<dbReference type="PROSITE" id="PS50853">
    <property type="entry name" value="FN3"/>
    <property type="match status" value="1"/>
</dbReference>
<gene>
    <name type="primary">POMGNT2</name>
    <name type="synonym">AGO61</name>
    <name type="synonym">C3orf39</name>
    <name type="synonym">EOGTL</name>
    <name type="synonym">GTDC2</name>
</gene>
<keyword id="KW-0002">3D-structure</keyword>
<keyword id="KW-0912">Congenital muscular dystrophy</keyword>
<keyword id="KW-0225">Disease variant</keyword>
<keyword id="KW-1215">Dystroglycanopathy</keyword>
<keyword id="KW-0256">Endoplasmic reticulum</keyword>
<keyword id="KW-0325">Glycoprotein</keyword>
<keyword id="KW-0328">Glycosyltransferase</keyword>
<keyword id="KW-0947">Limb-girdle muscular dystrophy</keyword>
<keyword id="KW-0451">Lissencephaly</keyword>
<keyword id="KW-0472">Membrane</keyword>
<keyword id="KW-1267">Proteomics identification</keyword>
<keyword id="KW-1185">Reference proteome</keyword>
<keyword id="KW-0735">Signal-anchor</keyword>
<keyword id="KW-0808">Transferase</keyword>
<keyword id="KW-0812">Transmembrane</keyword>
<keyword id="KW-1133">Transmembrane helix</keyword>
<feature type="chain" id="PRO_0000249014" description="Protein O-linked-mannose beta-1,4-N-acetylglucosaminyltransferase 2">
    <location>
        <begin position="1"/>
        <end position="580"/>
    </location>
</feature>
<feature type="topological domain" description="Cytoplasmic" evidence="1">
    <location>
        <begin position="1"/>
        <end position="4"/>
    </location>
</feature>
<feature type="transmembrane region" description="Helical; Signal-anchor for type II membrane protein" evidence="1">
    <location>
        <begin position="5"/>
        <end position="25"/>
    </location>
</feature>
<feature type="topological domain" description="Lumenal" evidence="1">
    <location>
        <begin position="26"/>
        <end position="580"/>
    </location>
</feature>
<feature type="domain" description="Fibronectin type-III" evidence="2">
    <location>
        <begin position="488"/>
        <end position="580"/>
    </location>
</feature>
<feature type="glycosylation site" description="N-linked (GlcNAc...) asparagine" evidence="1">
    <location>
        <position position="99"/>
    </location>
</feature>
<feature type="glycosylation site" description="N-linked (GlcNAc...) asparagine" evidence="1">
    <location>
        <position position="276"/>
    </location>
</feature>
<feature type="sequence variant" id="VAR_068967" description="In MDDGA8; dbSNP:rs387907300." evidence="3">
    <original>R</original>
    <variation>H</variation>
    <location>
        <position position="158"/>
    </location>
</feature>
<feature type="sequence variant" id="VAR_081560" description="In MDDGC8; no effect on protein expression; unchanged localization to the endoplasmic reticulum; decreased protein O-GlcNAc transferase catalytic activity." evidence="5">
    <original>M</original>
    <variation>T</variation>
    <location>
        <position position="165"/>
    </location>
</feature>
<feature type="sequence variant" id="VAR_081561" description="In MDDGA8." evidence="3">
    <location>
        <begin position="197"/>
        <end position="580"/>
    </location>
</feature>
<feature type="sequence variant" id="VAR_081562" description="In MDDGC8; no effect on protein expression; unchanged localization to the endoplasmic reticulum; decreased protein O-GlcNAc transferase catalytic activity; dbSNP:rs374042455." evidence="5">
    <original>P</original>
    <variation>L</variation>
    <location>
        <position position="253"/>
    </location>
</feature>
<feature type="sequence variant" id="VAR_081563" description="In MDDGA8." evidence="3">
    <location>
        <begin position="445"/>
        <end position="580"/>
    </location>
</feature>
<feature type="helix" evidence="8">
    <location>
        <begin position="53"/>
        <end position="63"/>
    </location>
</feature>
<feature type="strand" evidence="8">
    <location>
        <begin position="66"/>
        <end position="73"/>
    </location>
</feature>
<feature type="helix" evidence="8">
    <location>
        <begin position="74"/>
        <end position="76"/>
    </location>
</feature>
<feature type="strand" evidence="8">
    <location>
        <begin position="78"/>
        <end position="87"/>
    </location>
</feature>
<feature type="turn" evidence="8">
    <location>
        <begin position="88"/>
        <end position="91"/>
    </location>
</feature>
<feature type="strand" evidence="8">
    <location>
        <begin position="92"/>
        <end position="97"/>
    </location>
</feature>
<feature type="strand" evidence="8">
    <location>
        <begin position="102"/>
        <end position="105"/>
    </location>
</feature>
<feature type="helix" evidence="8">
    <location>
        <begin position="108"/>
        <end position="112"/>
    </location>
</feature>
<feature type="strand" evidence="8">
    <location>
        <begin position="116"/>
        <end position="122"/>
    </location>
</feature>
<feature type="strand" evidence="8">
    <location>
        <begin position="132"/>
        <end position="136"/>
    </location>
</feature>
<feature type="helix" evidence="8">
    <location>
        <begin position="137"/>
        <end position="142"/>
    </location>
</feature>
<feature type="strand" evidence="8">
    <location>
        <begin position="147"/>
        <end position="149"/>
    </location>
</feature>
<feature type="strand" evidence="8">
    <location>
        <begin position="153"/>
        <end position="156"/>
    </location>
</feature>
<feature type="helix" evidence="8">
    <location>
        <begin position="164"/>
        <end position="170"/>
    </location>
</feature>
<feature type="helix" evidence="8">
    <location>
        <begin position="172"/>
        <end position="181"/>
    </location>
</feature>
<feature type="strand" evidence="9">
    <location>
        <begin position="182"/>
        <end position="184"/>
    </location>
</feature>
<feature type="helix" evidence="8">
    <location>
        <begin position="185"/>
        <end position="188"/>
    </location>
</feature>
<feature type="strand" evidence="8">
    <location>
        <begin position="190"/>
        <end position="193"/>
    </location>
</feature>
<feature type="helix" evidence="8">
    <location>
        <begin position="203"/>
        <end position="209"/>
    </location>
</feature>
<feature type="helix" evidence="8">
    <location>
        <begin position="217"/>
        <end position="221"/>
    </location>
</feature>
<feature type="strand" evidence="8">
    <location>
        <begin position="225"/>
        <end position="234"/>
    </location>
</feature>
<feature type="strand" evidence="8">
    <location>
        <begin position="246"/>
        <end position="249"/>
    </location>
</feature>
<feature type="strand" evidence="8">
    <location>
        <begin position="251"/>
        <end position="253"/>
    </location>
</feature>
<feature type="helix" evidence="8">
    <location>
        <begin position="261"/>
        <end position="274"/>
    </location>
</feature>
<feature type="strand" evidence="8">
    <location>
        <begin position="288"/>
        <end position="292"/>
    </location>
</feature>
<feature type="strand" evidence="8">
    <location>
        <begin position="295"/>
        <end position="298"/>
    </location>
</feature>
<feature type="helix" evidence="8">
    <location>
        <begin position="303"/>
        <end position="314"/>
    </location>
</feature>
<feature type="strand" evidence="8">
    <location>
        <begin position="316"/>
        <end position="321"/>
    </location>
</feature>
<feature type="turn" evidence="8">
    <location>
        <begin position="323"/>
        <end position="325"/>
    </location>
</feature>
<feature type="helix" evidence="8">
    <location>
        <begin position="328"/>
        <end position="336"/>
    </location>
</feature>
<feature type="strand" evidence="8">
    <location>
        <begin position="339"/>
        <end position="346"/>
    </location>
</feature>
<feature type="helix" evidence="8">
    <location>
        <begin position="347"/>
        <end position="354"/>
    </location>
</feature>
<feature type="strand" evidence="8">
    <location>
        <begin position="360"/>
        <end position="365"/>
    </location>
</feature>
<feature type="helix" evidence="8">
    <location>
        <begin position="371"/>
        <end position="373"/>
    </location>
</feature>
<feature type="helix" evidence="8">
    <location>
        <begin position="376"/>
        <end position="381"/>
    </location>
</feature>
<feature type="turn" evidence="9">
    <location>
        <begin position="384"/>
        <end position="386"/>
    </location>
</feature>
<feature type="strand" evidence="8">
    <location>
        <begin position="389"/>
        <end position="394"/>
    </location>
</feature>
<feature type="helix" evidence="8">
    <location>
        <begin position="398"/>
        <end position="400"/>
    </location>
</feature>
<feature type="turn" evidence="8">
    <location>
        <begin position="409"/>
        <end position="412"/>
    </location>
</feature>
<feature type="helix" evidence="8">
    <location>
        <begin position="421"/>
        <end position="427"/>
    </location>
</feature>
<feature type="turn" evidence="8">
    <location>
        <begin position="436"/>
        <end position="438"/>
    </location>
</feature>
<feature type="helix" evidence="8">
    <location>
        <begin position="440"/>
        <end position="446"/>
    </location>
</feature>
<feature type="helix" evidence="8">
    <location>
        <begin position="454"/>
        <end position="463"/>
    </location>
</feature>
<feature type="strand" evidence="8">
    <location>
        <begin position="486"/>
        <end position="495"/>
    </location>
</feature>
<feature type="turn" evidence="8">
    <location>
        <begin position="496"/>
        <end position="498"/>
    </location>
</feature>
<feature type="strand" evidence="8">
    <location>
        <begin position="499"/>
        <end position="507"/>
    </location>
</feature>
<feature type="helix" evidence="8">
    <location>
        <begin position="510"/>
        <end position="514"/>
    </location>
</feature>
<feature type="strand" evidence="8">
    <location>
        <begin position="520"/>
        <end position="528"/>
    </location>
</feature>
<feature type="strand" evidence="8">
    <location>
        <begin position="537"/>
        <end position="546"/>
    </location>
</feature>
<feature type="strand" evidence="8">
    <location>
        <begin position="555"/>
        <end position="564"/>
    </location>
</feature>
<feature type="turn" evidence="8">
    <location>
        <begin position="565"/>
        <end position="567"/>
    </location>
</feature>
<feature type="strand" evidence="8">
    <location>
        <begin position="576"/>
        <end position="579"/>
    </location>
</feature>
<organism>
    <name type="scientific">Homo sapiens</name>
    <name type="common">Human</name>
    <dbReference type="NCBI Taxonomy" id="9606"/>
    <lineage>
        <taxon>Eukaryota</taxon>
        <taxon>Metazoa</taxon>
        <taxon>Chordata</taxon>
        <taxon>Craniata</taxon>
        <taxon>Vertebrata</taxon>
        <taxon>Euteleostomi</taxon>
        <taxon>Mammalia</taxon>
        <taxon>Eutheria</taxon>
        <taxon>Euarchontoglires</taxon>
        <taxon>Primates</taxon>
        <taxon>Haplorrhini</taxon>
        <taxon>Catarrhini</taxon>
        <taxon>Hominidae</taxon>
        <taxon>Homo</taxon>
    </lineage>
</organism>
<accession>Q8NAT1</accession>
<accession>B3KWC3</accession>
<accession>Q96SY3</accession>
<protein>
    <recommendedName>
        <fullName evidence="6">Protein O-linked-mannose beta-1,4-N-acetylglucosaminyltransferase 2</fullName>
        <shortName evidence="6">POMGnT2</shortName>
        <ecNumber evidence="4 5">2.4.1.312</ecNumber>
    </recommendedName>
    <alternativeName>
        <fullName>Extracellular O-linked N-acetylglucosamine transferase-like</fullName>
    </alternativeName>
    <alternativeName>
        <fullName>Glycosyltransferase-like domain-containing protein 2</fullName>
    </alternativeName>
</protein>
<comment type="function">
    <text evidence="4 5">O-linked mannose beta-1,4-N-acetylglucosaminyltransferase that transfers UDP-N-acetyl-D-glucosamine to the 4-position of the mannose to generate N-acetyl-D-glucosamine-beta-1,4-O-D-mannosylprotein. Involved in the biosynthesis of the phosphorylated O-mannosyl trisaccharide (N-acetylgalactosamine-beta-3-N-acetylglucosamine-beta-4-(phosphate-6-)mannose), a carbohydrate structure present in alpha-dystroglycan (DAG1), which is required for binding laminin G-like domain-containing extracellular proteins with high affinity.</text>
</comment>
<comment type="catalytic activity">
    <reaction evidence="4 5">
        <text>3-O-(alpha-D-mannosyl)-L-threonyl-[protein] + UDP-N-acetyl-alpha-D-glucosamine = 3-O-(N-acetyl-beta-D-glucosaminyl-(1-&gt;4)-alpha-D-mannosyl)-L-threonyl-[protein] + UDP + H(+)</text>
        <dbReference type="Rhea" id="RHEA:37663"/>
        <dbReference type="Rhea" id="RHEA-COMP:13547"/>
        <dbReference type="Rhea" id="RHEA-COMP:13618"/>
        <dbReference type="ChEBI" id="CHEBI:15378"/>
        <dbReference type="ChEBI" id="CHEBI:57705"/>
        <dbReference type="ChEBI" id="CHEBI:58223"/>
        <dbReference type="ChEBI" id="CHEBI:137323"/>
        <dbReference type="ChEBI" id="CHEBI:137540"/>
        <dbReference type="EC" id="2.4.1.312"/>
    </reaction>
</comment>
<comment type="pathway">
    <text evidence="4">Protein modification; protein glycosylation.</text>
</comment>
<comment type="interaction">
    <interactant intactId="EBI-10269044">
        <id>Q8NAT1</id>
    </interactant>
    <interactant intactId="EBI-945833">
        <id>Q7Z3S9</id>
        <label>NOTCH2NLA</label>
    </interactant>
    <organismsDiffer>false</organismsDiffer>
    <experiments>3</experiments>
</comment>
<comment type="subcellular location">
    <subcellularLocation>
        <location evidence="4 5">Endoplasmic reticulum membrane</location>
        <topology evidence="4">Single-pass type II membrane protein</topology>
    </subcellularLocation>
</comment>
<comment type="tissue specificity">
    <text evidence="3">Highly expressed in the brain, muscle, heart, and kidney in both fetus and adult. In the brain, highest expression in the cortex and cerebellum. Highly expressed in the pancreas.</text>
</comment>
<comment type="disease" evidence="3">
    <disease id="DI-03536">
        <name>Muscular dystrophy-dystroglycanopathy congenital with brain and eye anomalies A8</name>
        <acronym>MDDGA8</acronym>
        <description>An autosomal recessive disorder characterized by congenital muscular dystrophy associated with cobblestone lissencephaly and other brain anomalies, eye malformations, profound intellectual disability, and death usually in the first years of life. Included diseases are the more severe Walker-Warburg syndrome and the slightly less severe muscle-eye-brain disease.</description>
        <dbReference type="MIM" id="614830"/>
    </disease>
    <text>The disease is caused by variants affecting the gene represented in this entry.</text>
</comment>
<comment type="disease" evidence="5">
    <disease id="DI-05342">
        <name>Muscular dystrophy-dystroglycanopathy limb-girdle C8</name>
        <acronym>MDDGC8</acronym>
        <description>An autosomal recessive muscular disease with onset in childhood, characterized by limb-girdle muscular dystrophy and intellectual disability without brain malformation. Disease severity is highly variable and some patients may be clinically asymptomatic.</description>
        <dbReference type="MIM" id="618135"/>
    </disease>
    <text>The disease is caused by variants affecting the gene represented in this entry.</text>
</comment>
<comment type="similarity">
    <text evidence="7">Belongs to the glycosyltransferase 61 family.</text>
</comment>
<proteinExistence type="evidence at protein level"/>
<reference key="1">
    <citation type="journal article" date="2004" name="Nat. Genet.">
        <title>Complete sequencing and characterization of 21,243 full-length human cDNAs.</title>
        <authorList>
            <person name="Ota T."/>
            <person name="Suzuki Y."/>
            <person name="Nishikawa T."/>
            <person name="Otsuki T."/>
            <person name="Sugiyama T."/>
            <person name="Irie R."/>
            <person name="Wakamatsu A."/>
            <person name="Hayashi K."/>
            <person name="Sato H."/>
            <person name="Nagai K."/>
            <person name="Kimura K."/>
            <person name="Makita H."/>
            <person name="Sekine M."/>
            <person name="Obayashi M."/>
            <person name="Nishi T."/>
            <person name="Shibahara T."/>
            <person name="Tanaka T."/>
            <person name="Ishii S."/>
            <person name="Yamamoto J."/>
            <person name="Saito K."/>
            <person name="Kawai Y."/>
            <person name="Isono Y."/>
            <person name="Nakamura Y."/>
            <person name="Nagahari K."/>
            <person name="Murakami K."/>
            <person name="Yasuda T."/>
            <person name="Iwayanagi T."/>
            <person name="Wagatsuma M."/>
            <person name="Shiratori A."/>
            <person name="Sudo H."/>
            <person name="Hosoiri T."/>
            <person name="Kaku Y."/>
            <person name="Kodaira H."/>
            <person name="Kondo H."/>
            <person name="Sugawara M."/>
            <person name="Takahashi M."/>
            <person name="Kanda K."/>
            <person name="Yokoi T."/>
            <person name="Furuya T."/>
            <person name="Kikkawa E."/>
            <person name="Omura Y."/>
            <person name="Abe K."/>
            <person name="Kamihara K."/>
            <person name="Katsuta N."/>
            <person name="Sato K."/>
            <person name="Tanikawa M."/>
            <person name="Yamazaki M."/>
            <person name="Ninomiya K."/>
            <person name="Ishibashi T."/>
            <person name="Yamashita H."/>
            <person name="Murakawa K."/>
            <person name="Fujimori K."/>
            <person name="Tanai H."/>
            <person name="Kimata M."/>
            <person name="Watanabe M."/>
            <person name="Hiraoka S."/>
            <person name="Chiba Y."/>
            <person name="Ishida S."/>
            <person name="Ono Y."/>
            <person name="Takiguchi S."/>
            <person name="Watanabe S."/>
            <person name="Yosida M."/>
            <person name="Hotuta T."/>
            <person name="Kusano J."/>
            <person name="Kanehori K."/>
            <person name="Takahashi-Fujii A."/>
            <person name="Hara H."/>
            <person name="Tanase T.-O."/>
            <person name="Nomura Y."/>
            <person name="Togiya S."/>
            <person name="Komai F."/>
            <person name="Hara R."/>
            <person name="Takeuchi K."/>
            <person name="Arita M."/>
            <person name="Imose N."/>
            <person name="Musashino K."/>
            <person name="Yuuki H."/>
            <person name="Oshima A."/>
            <person name="Sasaki N."/>
            <person name="Aotsuka S."/>
            <person name="Yoshikawa Y."/>
            <person name="Matsunawa H."/>
            <person name="Ichihara T."/>
            <person name="Shiohata N."/>
            <person name="Sano S."/>
            <person name="Moriya S."/>
            <person name="Momiyama H."/>
            <person name="Satoh N."/>
            <person name="Takami S."/>
            <person name="Terashima Y."/>
            <person name="Suzuki O."/>
            <person name="Nakagawa S."/>
            <person name="Senoh A."/>
            <person name="Mizoguchi H."/>
            <person name="Goto Y."/>
            <person name="Shimizu F."/>
            <person name="Wakebe H."/>
            <person name="Hishigaki H."/>
            <person name="Watanabe T."/>
            <person name="Sugiyama A."/>
            <person name="Takemoto M."/>
            <person name="Kawakami B."/>
            <person name="Yamazaki M."/>
            <person name="Watanabe K."/>
            <person name="Kumagai A."/>
            <person name="Itakura S."/>
            <person name="Fukuzumi Y."/>
            <person name="Fujimori Y."/>
            <person name="Komiyama M."/>
            <person name="Tashiro H."/>
            <person name="Tanigami A."/>
            <person name="Fujiwara T."/>
            <person name="Ono T."/>
            <person name="Yamada K."/>
            <person name="Fujii Y."/>
            <person name="Ozaki K."/>
            <person name="Hirao M."/>
            <person name="Ohmori Y."/>
            <person name="Kawabata A."/>
            <person name="Hikiji T."/>
            <person name="Kobatake N."/>
            <person name="Inagaki H."/>
            <person name="Ikema Y."/>
            <person name="Okamoto S."/>
            <person name="Okitani R."/>
            <person name="Kawakami T."/>
            <person name="Noguchi S."/>
            <person name="Itoh T."/>
            <person name="Shigeta K."/>
            <person name="Senba T."/>
            <person name="Matsumura K."/>
            <person name="Nakajima Y."/>
            <person name="Mizuno T."/>
            <person name="Morinaga M."/>
            <person name="Sasaki M."/>
            <person name="Togashi T."/>
            <person name="Oyama M."/>
            <person name="Hata H."/>
            <person name="Watanabe M."/>
            <person name="Komatsu T."/>
            <person name="Mizushima-Sugano J."/>
            <person name="Satoh T."/>
            <person name="Shirai Y."/>
            <person name="Takahashi Y."/>
            <person name="Nakagawa K."/>
            <person name="Okumura K."/>
            <person name="Nagase T."/>
            <person name="Nomura N."/>
            <person name="Kikuchi H."/>
            <person name="Masuho Y."/>
            <person name="Yamashita R."/>
            <person name="Nakai K."/>
            <person name="Yada T."/>
            <person name="Nakamura Y."/>
            <person name="Ohara O."/>
            <person name="Isogai T."/>
            <person name="Sugano S."/>
        </authorList>
    </citation>
    <scope>NUCLEOTIDE SEQUENCE [LARGE SCALE MRNA]</scope>
    <source>
        <tissue>Brain</tissue>
    </source>
</reference>
<reference key="2">
    <citation type="journal article" date="2006" name="Nature">
        <title>The DNA sequence, annotation and analysis of human chromosome 3.</title>
        <authorList>
            <person name="Muzny D.M."/>
            <person name="Scherer S.E."/>
            <person name="Kaul R."/>
            <person name="Wang J."/>
            <person name="Yu J."/>
            <person name="Sudbrak R."/>
            <person name="Buhay C.J."/>
            <person name="Chen R."/>
            <person name="Cree A."/>
            <person name="Ding Y."/>
            <person name="Dugan-Rocha S."/>
            <person name="Gill R."/>
            <person name="Gunaratne P."/>
            <person name="Harris R.A."/>
            <person name="Hawes A.C."/>
            <person name="Hernandez J."/>
            <person name="Hodgson A.V."/>
            <person name="Hume J."/>
            <person name="Jackson A."/>
            <person name="Khan Z.M."/>
            <person name="Kovar-Smith C."/>
            <person name="Lewis L.R."/>
            <person name="Lozado R.J."/>
            <person name="Metzker M.L."/>
            <person name="Milosavljevic A."/>
            <person name="Miner G.R."/>
            <person name="Morgan M.B."/>
            <person name="Nazareth L.V."/>
            <person name="Scott G."/>
            <person name="Sodergren E."/>
            <person name="Song X.-Z."/>
            <person name="Steffen D."/>
            <person name="Wei S."/>
            <person name="Wheeler D.A."/>
            <person name="Wright M.W."/>
            <person name="Worley K.C."/>
            <person name="Yuan Y."/>
            <person name="Zhang Z."/>
            <person name="Adams C.Q."/>
            <person name="Ansari-Lari M.A."/>
            <person name="Ayele M."/>
            <person name="Brown M.J."/>
            <person name="Chen G."/>
            <person name="Chen Z."/>
            <person name="Clendenning J."/>
            <person name="Clerc-Blankenburg K.P."/>
            <person name="Chen R."/>
            <person name="Chen Z."/>
            <person name="Davis C."/>
            <person name="Delgado O."/>
            <person name="Dinh H.H."/>
            <person name="Dong W."/>
            <person name="Draper H."/>
            <person name="Ernst S."/>
            <person name="Fu G."/>
            <person name="Gonzalez-Garay M.L."/>
            <person name="Garcia D.K."/>
            <person name="Gillett W."/>
            <person name="Gu J."/>
            <person name="Hao B."/>
            <person name="Haugen E."/>
            <person name="Havlak P."/>
            <person name="He X."/>
            <person name="Hennig S."/>
            <person name="Hu S."/>
            <person name="Huang W."/>
            <person name="Jackson L.R."/>
            <person name="Jacob L.S."/>
            <person name="Kelly S.H."/>
            <person name="Kube M."/>
            <person name="Levy R."/>
            <person name="Li Z."/>
            <person name="Liu B."/>
            <person name="Liu J."/>
            <person name="Liu W."/>
            <person name="Lu J."/>
            <person name="Maheshwari M."/>
            <person name="Nguyen B.-V."/>
            <person name="Okwuonu G.O."/>
            <person name="Palmeiri A."/>
            <person name="Pasternak S."/>
            <person name="Perez L.M."/>
            <person name="Phelps K.A."/>
            <person name="Plopper F.J."/>
            <person name="Qiang B."/>
            <person name="Raymond C."/>
            <person name="Rodriguez R."/>
            <person name="Saenphimmachak C."/>
            <person name="Santibanez J."/>
            <person name="Shen H."/>
            <person name="Shen Y."/>
            <person name="Subramanian S."/>
            <person name="Tabor P.E."/>
            <person name="Verduzco D."/>
            <person name="Waldron L."/>
            <person name="Wang J."/>
            <person name="Wang J."/>
            <person name="Wang Q."/>
            <person name="Williams G.A."/>
            <person name="Wong G.K.-S."/>
            <person name="Yao Z."/>
            <person name="Zhang J."/>
            <person name="Zhang X."/>
            <person name="Zhao G."/>
            <person name="Zhou J."/>
            <person name="Zhou Y."/>
            <person name="Nelson D."/>
            <person name="Lehrach H."/>
            <person name="Reinhardt R."/>
            <person name="Naylor S.L."/>
            <person name="Yang H."/>
            <person name="Olson M."/>
            <person name="Weinstock G."/>
            <person name="Gibbs R.A."/>
        </authorList>
    </citation>
    <scope>NUCLEOTIDE SEQUENCE [LARGE SCALE GENOMIC DNA]</scope>
</reference>
<reference key="3">
    <citation type="submission" date="2005-07" db="EMBL/GenBank/DDBJ databases">
        <authorList>
            <person name="Mural R.J."/>
            <person name="Istrail S."/>
            <person name="Sutton G.G."/>
            <person name="Florea L."/>
            <person name="Halpern A.L."/>
            <person name="Mobarry C.M."/>
            <person name="Lippert R."/>
            <person name="Walenz B."/>
            <person name="Shatkay H."/>
            <person name="Dew I."/>
            <person name="Miller J.R."/>
            <person name="Flanigan M.J."/>
            <person name="Edwards N.J."/>
            <person name="Bolanos R."/>
            <person name="Fasulo D."/>
            <person name="Halldorsson B.V."/>
            <person name="Hannenhalli S."/>
            <person name="Turner R."/>
            <person name="Yooseph S."/>
            <person name="Lu F."/>
            <person name="Nusskern D.R."/>
            <person name="Shue B.C."/>
            <person name="Zheng X.H."/>
            <person name="Zhong F."/>
            <person name="Delcher A.L."/>
            <person name="Huson D.H."/>
            <person name="Kravitz S.A."/>
            <person name="Mouchard L."/>
            <person name="Reinert K."/>
            <person name="Remington K.A."/>
            <person name="Clark A.G."/>
            <person name="Waterman M.S."/>
            <person name="Eichler E.E."/>
            <person name="Adams M.D."/>
            <person name="Hunkapiller M.W."/>
            <person name="Myers E.W."/>
            <person name="Venter J.C."/>
        </authorList>
    </citation>
    <scope>NUCLEOTIDE SEQUENCE [LARGE SCALE GENOMIC DNA]</scope>
</reference>
<reference key="4">
    <citation type="journal article" date="2004" name="Genome Res.">
        <title>The status, quality, and expansion of the NIH full-length cDNA project: the Mammalian Gene Collection (MGC).</title>
        <authorList>
            <consortium name="The MGC Project Team"/>
        </authorList>
    </citation>
    <scope>NUCLEOTIDE SEQUENCE [LARGE SCALE MRNA]</scope>
    <source>
        <tissue>Placenta</tissue>
    </source>
</reference>
<reference key="5">
    <citation type="journal article" date="2013" name="Science">
        <title>SGK196 is a glycosylation-specific O-mannose kinase required for dystroglycan function.</title>
        <authorList>
            <person name="Yoshida-Moriguchi T."/>
            <person name="Willer T."/>
            <person name="Anderson M.E."/>
            <person name="Venzke D."/>
            <person name="Whyte T."/>
            <person name="Muntoni F."/>
            <person name="Lee H."/>
            <person name="Nelson S.F."/>
            <person name="Yu L."/>
            <person name="Campbell K.P."/>
        </authorList>
    </citation>
    <scope>FUNCTION</scope>
    <scope>CATALYTIC ACTIVITY</scope>
    <scope>SUBCELLULAR LOCATION</scope>
    <scope>PATHWAY</scope>
</reference>
<reference key="6">
    <citation type="journal article" date="2012" name="Am. J. Hum. Genet.">
        <title>Exome sequencing and functional validation in zebrafish identify GTDC2 mutations as a cause of Walker-Warburg syndrome.</title>
        <authorList>
            <person name="Manzini M.C."/>
            <person name="Tambunan D.E."/>
            <person name="Hill R.S."/>
            <person name="Yu T.W."/>
            <person name="Maynard T.M."/>
            <person name="Heinzen E.L."/>
            <person name="Shianna K.V."/>
            <person name="Stevens C.R."/>
            <person name="Partlow J.N."/>
            <person name="Barry B.J."/>
            <person name="Rodriguez J."/>
            <person name="Gupta V.A."/>
            <person name="Al-Qudah A.K."/>
            <person name="Eyaid W.M."/>
            <person name="Friedman J.M."/>
            <person name="Salih M.A."/>
            <person name="Clark R."/>
            <person name="Moroni I."/>
            <person name="Mora M."/>
            <person name="Beggs A.H."/>
            <person name="Gabriel S.B."/>
            <person name="Walsh C.A."/>
        </authorList>
    </citation>
    <scope>TISSUE SPECIFICITY</scope>
    <scope>INVOLVEMENT IN MDDGA8</scope>
    <scope>VARIANTS MDDGA8 HIS-158; 197-TRP--THR-580 DEL AND 445-ARG--THR-580 DEL</scope>
</reference>
<reference key="7">
    <citation type="journal article" date="2015" name="Neurol. Genet.">
        <title>Milder forms of muscular dystrophy associated with POMGNT2 mutations.</title>
        <authorList>
            <person name="Endo Y."/>
            <person name="Dong M."/>
            <person name="Noguchi S."/>
            <person name="Ogawa M."/>
            <person name="Hayashi Y.K."/>
            <person name="Kuru S."/>
            <person name="Sugiyama K."/>
            <person name="Nagai S."/>
            <person name="Ozasa S."/>
            <person name="Nonaka I."/>
            <person name="Nishino I."/>
        </authorList>
    </citation>
    <scope>FUNCTION</scope>
    <scope>CATALYTIC ACTIVITY</scope>
    <scope>SUBCELLULAR LOCATION</scope>
    <scope>INVOLVEMENT IN MDDGC8</scope>
    <scope>VARIANTS MDDGC8 THR-165 AND LEU-253</scope>
    <scope>CHARACTERIZATION OF VARIANTS MDDGC8 THR-165 AND LEU-253</scope>
</reference>